<organism>
    <name type="scientific">Human immunodeficiency virus type 1 group M subtype B (isolate RF/HAT3)</name>
    <name type="common">HIV-1</name>
    <dbReference type="NCBI Taxonomy" id="11701"/>
    <lineage>
        <taxon>Viruses</taxon>
        <taxon>Riboviria</taxon>
        <taxon>Pararnavirae</taxon>
        <taxon>Artverviricota</taxon>
        <taxon>Revtraviricetes</taxon>
        <taxon>Ortervirales</taxon>
        <taxon>Retroviridae</taxon>
        <taxon>Orthoretrovirinae</taxon>
        <taxon>Lentivirus</taxon>
        <taxon>Human immunodeficiency virus type 1</taxon>
    </lineage>
</organism>
<accession>P05954</accession>
<feature type="chain" id="PRO_0000085448" description="Protein Vpr">
    <location>
        <begin position="1"/>
        <end position="96"/>
    </location>
</feature>
<feature type="region of interest" description="Homooligomerization" evidence="1">
    <location>
        <begin position="1"/>
        <end position="42"/>
    </location>
</feature>
<feature type="modified residue" description="Phosphoserine; by host" evidence="1">
    <location>
        <position position="79"/>
    </location>
</feature>
<feature type="modified residue" description="Phosphoserine; by host" evidence="1">
    <location>
        <position position="94"/>
    </location>
</feature>
<feature type="modified residue" description="Phosphoserine; by host" evidence="1">
    <location>
        <position position="96"/>
    </location>
</feature>
<feature type="helix" evidence="2">
    <location>
        <begin position="14"/>
        <end position="32"/>
    </location>
</feature>
<comment type="function">
    <text evidence="1">During virus replication, may deplete host UNG protein, and incude G2-M cell cycle arrest. Acts by targeting specific host proteins for degradation by the 26S proteasome, through association with the cellular CUL4A-DDB1 E3 ligase complex by direct interaction with host VPRPB/DCAF-1. Cell cycle arrest reportedly occurs within hours of infection and is not blocked by antiviral agents, suggesting that it is initiated by the VPR carried into the virion. Additionally, VPR induces apoptosis in a cell cycle dependent manner suggesting that these two effects are mechanistically linked. Detected in the serum and cerebrospinal fluid of AIDS patient, VPR may also induce cell death to bystander cells.</text>
</comment>
<comment type="function">
    <text evidence="1">During virus entry, plays a role in the transport of the viral pre-integration (PIC) complex to the host nucleus. This function is crucial for viral infection of non-dividing macrophages. May act directly at the nuclear pore complex, by binding nucleoporins phenylalanine-glycine (FG)-repeat regions.</text>
</comment>
<comment type="subunit">
    <text evidence="1">Homooligomer, may form homodimer. Interacts with p6-gag region of the Pr55 Gag precursor protein through a (Leu-X-X)4 motif near the C-terminus of the P6gag protein. Interacts with host UNG. May interact with host RAD23A/HHR23A. Interacts with host VPRBP/DCAF1, leading to hijack the CUL4A-RBX1-DDB1-DCAF1/VPRBP complex, mediating ubiquitination of host proteins such as TERT and ZGPAT and arrest of the cell cycle in G2 phase.</text>
</comment>
<comment type="subcellular location">
    <subcellularLocation>
        <location evidence="1">Virion</location>
    </subcellularLocation>
    <subcellularLocation>
        <location evidence="1">Host nucleus</location>
    </subcellularLocation>
    <subcellularLocation>
        <location evidence="1">Host extracellular space</location>
    </subcellularLocation>
    <text evidence="1">Incorporation into virion is dependent on p6 GAG sequences. Lacks a canonical nuclear localization signal, thus import into nucleus may function independently of the human importin pathway. Detected in high quantity in the serum and cerebrospinal fluid of AIDS patient.</text>
</comment>
<comment type="PTM">
    <text evidence="1">Phosphorylated on several residues by host. These phosphorylations regulate VPR activity for the nuclear import of the HIV-1 pre-integration complex.</text>
</comment>
<comment type="miscellaneous">
    <text evidence="1">HIV-1 lineages are divided in three main groups, M (for Major), O (for Outlier), and N (for New, or Non-M, Non-O). The vast majority of strains found worldwide belong to the group M. Group O seems to be endemic to and largely confined to Cameroon and neighboring countries in West Central Africa, where these viruses represent a small minority of HIV-1 strains. The group N is represented by a limited number of isolates from Cameroonian persons. The group M is further subdivided in 9 clades or subtypes (A to D, F to H, J and K).</text>
</comment>
<comment type="similarity">
    <text evidence="1">Belongs to the HIV-1 VPR protein family.</text>
</comment>
<dbReference type="EMBL" id="M17451">
    <property type="protein sequence ID" value="AAA45055.1"/>
    <property type="molecule type" value="Genomic_RNA"/>
</dbReference>
<dbReference type="PDB" id="1FI0">
    <property type="method" value="NMR"/>
    <property type="chains" value="A=13-33"/>
</dbReference>
<dbReference type="PDBsum" id="1FI0"/>
<dbReference type="BMRB" id="P05954"/>
<dbReference type="SMR" id="P05954"/>
<dbReference type="EvolutionaryTrace" id="P05954"/>
<dbReference type="Proteomes" id="UP000007699">
    <property type="component" value="Segment"/>
</dbReference>
<dbReference type="GO" id="GO:0043657">
    <property type="term" value="C:host cell"/>
    <property type="evidence" value="ECO:0007669"/>
    <property type="project" value="GOC"/>
</dbReference>
<dbReference type="GO" id="GO:0042025">
    <property type="term" value="C:host cell nucleus"/>
    <property type="evidence" value="ECO:0007669"/>
    <property type="project" value="UniProtKB-SubCell"/>
</dbReference>
<dbReference type="GO" id="GO:0043655">
    <property type="term" value="C:host extracellular space"/>
    <property type="evidence" value="ECO:0007669"/>
    <property type="project" value="UniProtKB-SubCell"/>
</dbReference>
<dbReference type="GO" id="GO:0044423">
    <property type="term" value="C:virion component"/>
    <property type="evidence" value="ECO:0007669"/>
    <property type="project" value="UniProtKB-UniRule"/>
</dbReference>
<dbReference type="GO" id="GO:0006351">
    <property type="term" value="P:DNA-templated transcription"/>
    <property type="evidence" value="ECO:0007669"/>
    <property type="project" value="UniProtKB-UniRule"/>
</dbReference>
<dbReference type="GO" id="GO:0034220">
    <property type="term" value="P:monoatomic ion transmembrane transport"/>
    <property type="evidence" value="ECO:0007669"/>
    <property type="project" value="UniProtKB-KW"/>
</dbReference>
<dbReference type="GO" id="GO:0051260">
    <property type="term" value="P:protein homooligomerization"/>
    <property type="evidence" value="ECO:0007669"/>
    <property type="project" value="UniProtKB-UniRule"/>
</dbReference>
<dbReference type="GO" id="GO:0006355">
    <property type="term" value="P:regulation of DNA-templated transcription"/>
    <property type="evidence" value="ECO:0007669"/>
    <property type="project" value="UniProtKB-UniRule"/>
</dbReference>
<dbReference type="GO" id="GO:0046718">
    <property type="term" value="P:symbiont entry into host cell"/>
    <property type="evidence" value="ECO:0007669"/>
    <property type="project" value="UniProtKB-KW"/>
</dbReference>
<dbReference type="GO" id="GO:0052151">
    <property type="term" value="P:symbiont-mediated activation of host apoptosis"/>
    <property type="evidence" value="ECO:0007669"/>
    <property type="project" value="UniProtKB-UniRule"/>
</dbReference>
<dbReference type="GO" id="GO:0039592">
    <property type="term" value="P:symbiont-mediated arrest of host cell cycle during G2/M transition"/>
    <property type="evidence" value="ECO:0007669"/>
    <property type="project" value="UniProtKB-UniRule"/>
</dbReference>
<dbReference type="GO" id="GO:0075732">
    <property type="term" value="P:viral penetration into host nucleus"/>
    <property type="evidence" value="ECO:0007669"/>
    <property type="project" value="UniProtKB-UniRule"/>
</dbReference>
<dbReference type="FunFam" id="1.20.5.90:FF:000001">
    <property type="entry name" value="Protein Vpr"/>
    <property type="match status" value="1"/>
</dbReference>
<dbReference type="Gene3D" id="6.10.210.10">
    <property type="match status" value="1"/>
</dbReference>
<dbReference type="Gene3D" id="1.20.5.90">
    <property type="entry name" value="VpR/VpX protein, C-terminal domain"/>
    <property type="match status" value="1"/>
</dbReference>
<dbReference type="HAMAP" id="MF_04080">
    <property type="entry name" value="HIV_VPR"/>
    <property type="match status" value="1"/>
</dbReference>
<dbReference type="InterPro" id="IPR000012">
    <property type="entry name" value="RetroV_VpR/X"/>
</dbReference>
<dbReference type="Pfam" id="PF00522">
    <property type="entry name" value="VPR"/>
    <property type="match status" value="1"/>
</dbReference>
<dbReference type="PRINTS" id="PR00444">
    <property type="entry name" value="HIVVPRVPX"/>
</dbReference>
<gene>
    <name evidence="1" type="primary">vpr</name>
</gene>
<sequence>MEQAPEDQGPQREPYNEWTLELLEELKSEAVRHFPRLWLHSLGQHIYETYGDTWAGVEAIIRILQQLLFIHFRIGCQHSRIGITRQRRARNGASRS</sequence>
<organismHost>
    <name type="scientific">Homo sapiens</name>
    <name type="common">Human</name>
    <dbReference type="NCBI Taxonomy" id="9606"/>
</organismHost>
<name>VPR_HV1RH</name>
<evidence type="ECO:0000255" key="1">
    <source>
        <dbReference type="HAMAP-Rule" id="MF_04080"/>
    </source>
</evidence>
<evidence type="ECO:0007829" key="2">
    <source>
        <dbReference type="PDB" id="1FI0"/>
    </source>
</evidence>
<proteinExistence type="evidence at protein level"/>
<reference key="1">
    <citation type="journal article" date="1986" name="Cell">
        <title>Identification and characterization of conserved and variable regions in the envelope gene of HTLV-III/LAV, the retrovirus of AIDS.</title>
        <authorList>
            <person name="Starcich B.R."/>
            <person name="Hahn B.H."/>
            <person name="Shaw G.M."/>
            <person name="McNeely P.D."/>
            <person name="Modrow S."/>
            <person name="Wolf H."/>
            <person name="Parks E.S."/>
            <person name="Parks W.P."/>
            <person name="Josephs S.F."/>
            <person name="Gallo R.C."/>
            <person name="Wong-Staal F."/>
        </authorList>
    </citation>
    <scope>NUCLEOTIDE SEQUENCE [GENOMIC RNA]</scope>
</reference>
<reference key="2">
    <citation type="journal article" date="2001" name="Eur. J. Biochem.">
        <title>Solution structure of human immunodeficiency virus type 1 Vpr(13-33) peptide in micelles.</title>
        <authorList>
            <person name="Engler A."/>
            <person name="Stangler T."/>
            <person name="Willbold D."/>
        </authorList>
    </citation>
    <scope>STRUCTURE BY NMR OF 13-33</scope>
</reference>
<protein>
    <recommendedName>
        <fullName evidence="1">Protein Vpr</fullName>
    </recommendedName>
    <alternativeName>
        <fullName evidence="1">R ORF protein</fullName>
    </alternativeName>
    <alternativeName>
        <fullName evidence="1">Viral protein R</fullName>
    </alternativeName>
</protein>
<keyword id="KW-0002">3D-structure</keyword>
<keyword id="KW-0010">Activator</keyword>
<keyword id="KW-0014">AIDS</keyword>
<keyword id="KW-0053">Apoptosis</keyword>
<keyword id="KW-0131">Cell cycle</keyword>
<keyword id="KW-1079">Host G2/M cell cycle arrest by virus</keyword>
<keyword id="KW-1048">Host nucleus</keyword>
<keyword id="KW-0945">Host-virus interaction</keyword>
<keyword id="KW-0407">Ion channel</keyword>
<keyword id="KW-0406">Ion transport</keyword>
<keyword id="KW-1121">Modulation of host cell cycle by virus</keyword>
<keyword id="KW-0597">Phosphoprotein</keyword>
<keyword id="KW-1185">Reference proteome</keyword>
<keyword id="KW-0804">Transcription</keyword>
<keyword id="KW-0805">Transcription regulation</keyword>
<keyword id="KW-0813">Transport</keyword>
<keyword id="KW-1163">Viral penetration into host nucleus</keyword>
<keyword id="KW-0946">Virion</keyword>
<keyword id="KW-1160">Virus entry into host cell</keyword>